<accession>Q2NZX7</accession>
<organism>
    <name type="scientific">Xanthomonas oryzae pv. oryzae (strain MAFF 311018)</name>
    <dbReference type="NCBI Taxonomy" id="342109"/>
    <lineage>
        <taxon>Bacteria</taxon>
        <taxon>Pseudomonadati</taxon>
        <taxon>Pseudomonadota</taxon>
        <taxon>Gammaproteobacteria</taxon>
        <taxon>Lysobacterales</taxon>
        <taxon>Lysobacteraceae</taxon>
        <taxon>Xanthomonas</taxon>
    </lineage>
</organism>
<keyword id="KW-0687">Ribonucleoprotein</keyword>
<keyword id="KW-0689">Ribosomal protein</keyword>
<name>RL7_XANOM</name>
<evidence type="ECO:0000255" key="1">
    <source>
        <dbReference type="HAMAP-Rule" id="MF_00368"/>
    </source>
</evidence>
<evidence type="ECO:0000305" key="2"/>
<reference key="1">
    <citation type="journal article" date="2005" name="Jpn. Agric. Res. Q.">
        <title>Genome sequence of Xanthomonas oryzae pv. oryzae suggests contribution of large numbers of effector genes and insertion sequences to its race diversity.</title>
        <authorList>
            <person name="Ochiai H."/>
            <person name="Inoue Y."/>
            <person name="Takeya M."/>
            <person name="Sasaki A."/>
            <person name="Kaku H."/>
        </authorList>
    </citation>
    <scope>NUCLEOTIDE SEQUENCE [LARGE SCALE GENOMIC DNA]</scope>
    <source>
        <strain>MAFF 311018</strain>
    </source>
</reference>
<protein>
    <recommendedName>
        <fullName evidence="1">Large ribosomal subunit protein bL12</fullName>
    </recommendedName>
    <alternativeName>
        <fullName evidence="2">50S ribosomal protein L7/L12</fullName>
    </alternativeName>
</protein>
<sequence length="122" mass="12582">MSLTNEQIVDAIAEKSLMEVMELVKAIEDKFGVSAAAPVAAAAAAGPAAVVEEQTEFTVVLTNPGLNKVTAIKAVRGVTGLGLKEAKDLTEAGGILKEGVSKDEAEKIKKEMTEAGATVEVK</sequence>
<comment type="function">
    <text evidence="1">Forms part of the ribosomal stalk which helps the ribosome interact with GTP-bound translation factors. Is thus essential for accurate translation.</text>
</comment>
<comment type="subunit">
    <text evidence="1">Homodimer. Part of the ribosomal stalk of the 50S ribosomal subunit. Forms a multimeric L10(L12)X complex, where L10 forms an elongated spine to which 2 to 4 L12 dimers bind in a sequential fashion. Binds GTP-bound translation factors.</text>
</comment>
<comment type="similarity">
    <text evidence="1">Belongs to the bacterial ribosomal protein bL12 family.</text>
</comment>
<feature type="chain" id="PRO_0000243530" description="Large ribosomal subunit protein bL12">
    <location>
        <begin position="1"/>
        <end position="122"/>
    </location>
</feature>
<dbReference type="EMBL" id="AP008229">
    <property type="protein sequence ID" value="BAE70150.1"/>
    <property type="molecule type" value="Genomic_DNA"/>
</dbReference>
<dbReference type="RefSeq" id="WP_011260035.1">
    <property type="nucleotide sequence ID" value="NC_007705.1"/>
</dbReference>
<dbReference type="SMR" id="Q2NZX7"/>
<dbReference type="KEGG" id="xom:XOO3395"/>
<dbReference type="HOGENOM" id="CLU_086499_3_2_6"/>
<dbReference type="GO" id="GO:0022625">
    <property type="term" value="C:cytosolic large ribosomal subunit"/>
    <property type="evidence" value="ECO:0007669"/>
    <property type="project" value="TreeGrafter"/>
</dbReference>
<dbReference type="GO" id="GO:0003729">
    <property type="term" value="F:mRNA binding"/>
    <property type="evidence" value="ECO:0007669"/>
    <property type="project" value="TreeGrafter"/>
</dbReference>
<dbReference type="GO" id="GO:0003735">
    <property type="term" value="F:structural constituent of ribosome"/>
    <property type="evidence" value="ECO:0007669"/>
    <property type="project" value="InterPro"/>
</dbReference>
<dbReference type="GO" id="GO:0006412">
    <property type="term" value="P:translation"/>
    <property type="evidence" value="ECO:0007669"/>
    <property type="project" value="UniProtKB-UniRule"/>
</dbReference>
<dbReference type="CDD" id="cd00387">
    <property type="entry name" value="Ribosomal_L7_L12"/>
    <property type="match status" value="1"/>
</dbReference>
<dbReference type="FunFam" id="1.20.5.710:FF:000003">
    <property type="entry name" value="50S ribosomal protein L7/L12"/>
    <property type="match status" value="1"/>
</dbReference>
<dbReference type="FunFam" id="3.30.1390.10:FF:000001">
    <property type="entry name" value="50S ribosomal protein L7/L12"/>
    <property type="match status" value="1"/>
</dbReference>
<dbReference type="Gene3D" id="3.30.1390.10">
    <property type="match status" value="1"/>
</dbReference>
<dbReference type="Gene3D" id="1.20.5.710">
    <property type="entry name" value="Single helix bin"/>
    <property type="match status" value="1"/>
</dbReference>
<dbReference type="HAMAP" id="MF_00368">
    <property type="entry name" value="Ribosomal_bL12"/>
    <property type="match status" value="1"/>
</dbReference>
<dbReference type="InterPro" id="IPR000206">
    <property type="entry name" value="Ribosomal_bL12"/>
</dbReference>
<dbReference type="InterPro" id="IPR013823">
    <property type="entry name" value="Ribosomal_bL12_C"/>
</dbReference>
<dbReference type="InterPro" id="IPR014719">
    <property type="entry name" value="Ribosomal_bL12_C/ClpS-like"/>
</dbReference>
<dbReference type="InterPro" id="IPR008932">
    <property type="entry name" value="Ribosomal_bL12_oligo"/>
</dbReference>
<dbReference type="InterPro" id="IPR036235">
    <property type="entry name" value="Ribosomal_bL12_oligo_N_sf"/>
</dbReference>
<dbReference type="NCBIfam" id="TIGR00855">
    <property type="entry name" value="L12"/>
    <property type="match status" value="1"/>
</dbReference>
<dbReference type="PANTHER" id="PTHR45987">
    <property type="entry name" value="39S RIBOSOMAL PROTEIN L12"/>
    <property type="match status" value="1"/>
</dbReference>
<dbReference type="PANTHER" id="PTHR45987:SF4">
    <property type="entry name" value="LARGE RIBOSOMAL SUBUNIT PROTEIN BL12M"/>
    <property type="match status" value="1"/>
</dbReference>
<dbReference type="Pfam" id="PF00542">
    <property type="entry name" value="Ribosomal_L12"/>
    <property type="match status" value="1"/>
</dbReference>
<dbReference type="Pfam" id="PF16320">
    <property type="entry name" value="Ribosomal_L12_N"/>
    <property type="match status" value="1"/>
</dbReference>
<dbReference type="SUPFAM" id="SSF54736">
    <property type="entry name" value="ClpS-like"/>
    <property type="match status" value="1"/>
</dbReference>
<dbReference type="SUPFAM" id="SSF48300">
    <property type="entry name" value="Ribosomal protein L7/12, oligomerisation (N-terminal) domain"/>
    <property type="match status" value="1"/>
</dbReference>
<proteinExistence type="inferred from homology"/>
<gene>
    <name evidence="1" type="primary">rplL</name>
    <name type="ordered locus">XOO3395</name>
</gene>